<keyword id="KW-0456">Lyase</keyword>
<keyword id="KW-0501">Molybdenum cofactor biosynthesis</keyword>
<evidence type="ECO:0000255" key="1">
    <source>
        <dbReference type="HAMAP-Rule" id="MF_01224"/>
    </source>
</evidence>
<proteinExistence type="inferred from homology"/>
<reference key="1">
    <citation type="journal article" date="2000" name="Proc. Natl. Acad. Sci. U.S.A.">
        <title>Archaeal adaptation to higher temperatures revealed by genomic sequence of Thermoplasma volcanium.</title>
        <authorList>
            <person name="Kawashima T."/>
            <person name="Amano N."/>
            <person name="Koike H."/>
            <person name="Makino S."/>
            <person name="Higuchi S."/>
            <person name="Kawashima-Ohya Y."/>
            <person name="Watanabe K."/>
            <person name="Yamazaki M."/>
            <person name="Kanehori K."/>
            <person name="Kawamoto T."/>
            <person name="Nunoshiba T."/>
            <person name="Yamamoto Y."/>
            <person name="Aramaki H."/>
            <person name="Makino K."/>
            <person name="Suzuki M."/>
        </authorList>
    </citation>
    <scope>NUCLEOTIDE SEQUENCE [LARGE SCALE GENOMIC DNA]</scope>
    <source>
        <strain>ATCC 51530 / DSM 4299 / JCM 9571 / NBRC 15438 / GSS1</strain>
    </source>
</reference>
<comment type="function">
    <text evidence="1">Catalyzes the conversion of (8S)-3',8-cyclo-7,8-dihydroguanosine 5'-triphosphate to cyclic pyranopterin monophosphate (cPMP).</text>
</comment>
<comment type="catalytic activity">
    <reaction evidence="1">
        <text>(8S)-3',8-cyclo-7,8-dihydroguanosine 5'-triphosphate = cyclic pyranopterin phosphate + diphosphate</text>
        <dbReference type="Rhea" id="RHEA:49580"/>
        <dbReference type="ChEBI" id="CHEBI:33019"/>
        <dbReference type="ChEBI" id="CHEBI:59648"/>
        <dbReference type="ChEBI" id="CHEBI:131766"/>
        <dbReference type="EC" id="4.6.1.17"/>
    </reaction>
</comment>
<comment type="pathway">
    <text evidence="1">Cofactor biosynthesis; molybdopterin biosynthesis.</text>
</comment>
<comment type="subunit">
    <text evidence="1">Homohexamer; trimer of dimers.</text>
</comment>
<comment type="similarity">
    <text evidence="1">Belongs to the MoaC family.</text>
</comment>
<accession>Q977Y1</accession>
<dbReference type="EC" id="4.6.1.17" evidence="1"/>
<dbReference type="EMBL" id="BA000011">
    <property type="protein sequence ID" value="BAB59902.1"/>
    <property type="molecule type" value="Genomic_DNA"/>
</dbReference>
<dbReference type="RefSeq" id="WP_010917007.1">
    <property type="nucleotide sequence ID" value="NC_002689.2"/>
</dbReference>
<dbReference type="SMR" id="Q977Y1"/>
<dbReference type="STRING" id="273116.gene:9381550"/>
<dbReference type="PaxDb" id="273116-14324976"/>
<dbReference type="GeneID" id="1441855"/>
<dbReference type="KEGG" id="tvo:TVG0764460"/>
<dbReference type="eggNOG" id="arCOG01530">
    <property type="taxonomic scope" value="Archaea"/>
</dbReference>
<dbReference type="HOGENOM" id="CLU_074693_1_2_2"/>
<dbReference type="OrthoDB" id="10067at2157"/>
<dbReference type="PhylomeDB" id="Q977Y1"/>
<dbReference type="UniPathway" id="UPA00344"/>
<dbReference type="Proteomes" id="UP000001017">
    <property type="component" value="Chromosome"/>
</dbReference>
<dbReference type="GO" id="GO:0061799">
    <property type="term" value="F:cyclic pyranopterin monophosphate synthase activity"/>
    <property type="evidence" value="ECO:0007669"/>
    <property type="project" value="UniProtKB-UniRule"/>
</dbReference>
<dbReference type="GO" id="GO:0006777">
    <property type="term" value="P:Mo-molybdopterin cofactor biosynthetic process"/>
    <property type="evidence" value="ECO:0007669"/>
    <property type="project" value="UniProtKB-UniRule"/>
</dbReference>
<dbReference type="CDD" id="cd01419">
    <property type="entry name" value="MoaC_A"/>
    <property type="match status" value="1"/>
</dbReference>
<dbReference type="Gene3D" id="3.30.70.640">
    <property type="entry name" value="Molybdopterin cofactor biosynthesis C (MoaC) domain"/>
    <property type="match status" value="1"/>
</dbReference>
<dbReference type="HAMAP" id="MF_01224_A">
    <property type="entry name" value="MoaC_A"/>
    <property type="match status" value="1"/>
</dbReference>
<dbReference type="InterPro" id="IPR023047">
    <property type="entry name" value="Mo_CF_biosynth-C_arc"/>
</dbReference>
<dbReference type="InterPro" id="IPR036522">
    <property type="entry name" value="MoaC_sf"/>
</dbReference>
<dbReference type="InterPro" id="IPR002820">
    <property type="entry name" value="Mopterin_CF_biosynth-C_dom"/>
</dbReference>
<dbReference type="NCBIfam" id="NF008999">
    <property type="entry name" value="PRK12343.1"/>
    <property type="match status" value="1"/>
</dbReference>
<dbReference type="Pfam" id="PF01967">
    <property type="entry name" value="MoaC"/>
    <property type="match status" value="1"/>
</dbReference>
<dbReference type="SUPFAM" id="SSF55040">
    <property type="entry name" value="Molybdenum cofactor biosynthesis protein C, MoaC"/>
    <property type="match status" value="1"/>
</dbReference>
<gene>
    <name evidence="1" type="primary">moaC</name>
    <name type="ordered locus">TV0760</name>
    <name type="ORF">TVG0764460</name>
</gene>
<organism>
    <name type="scientific">Thermoplasma volcanium (strain ATCC 51530 / DSM 4299 / JCM 9571 / NBRC 15438 / GSS1)</name>
    <dbReference type="NCBI Taxonomy" id="273116"/>
    <lineage>
        <taxon>Archaea</taxon>
        <taxon>Methanobacteriati</taxon>
        <taxon>Thermoplasmatota</taxon>
        <taxon>Thermoplasmata</taxon>
        <taxon>Thermoplasmatales</taxon>
        <taxon>Thermoplasmataceae</taxon>
        <taxon>Thermoplasma</taxon>
    </lineage>
</organism>
<feature type="chain" id="PRO_0000097867" description="Probable cyclic pyranopterin monophosphate synthase">
    <location>
        <begin position="1"/>
        <end position="150"/>
    </location>
</feature>
<feature type="active site" evidence="1">
    <location>
        <position position="119"/>
    </location>
</feature>
<feature type="binding site" evidence="1">
    <location>
        <begin position="68"/>
        <end position="70"/>
    </location>
    <ligand>
        <name>substrate</name>
    </ligand>
</feature>
<feature type="binding site" evidence="1">
    <location>
        <begin position="104"/>
        <end position="105"/>
    </location>
    <ligand>
        <name>substrate</name>
    </ligand>
</feature>
<name>MOAC_THEVO</name>
<protein>
    <recommendedName>
        <fullName evidence="1">Probable cyclic pyranopterin monophosphate synthase</fullName>
        <ecNumber evidence="1">4.6.1.17</ecNumber>
    </recommendedName>
    <alternativeName>
        <fullName evidence="1">Molybdenum cofactor biosynthesis protein C</fullName>
    </alternativeName>
</protein>
<sequence length="150" mass="16884">MIDFDGNMINISRKDVVARKATAVGRIYLRKETITAIKNNQVKKGNVIEISRAVGTMYAKNTFLQIPYCHNIPIEGVDVDFSLGENYVEVTCSTTTSYKTGIEMEAINCVNGALLNIWDMVKYLEKDETGNYPETRIEGVHVIKKTKSQE</sequence>